<gene>
    <name type="primary">ipaH9.8</name>
    <name type="ordered locus">SSON_P167</name>
</gene>
<evidence type="ECO:0000250" key="1"/>
<evidence type="ECO:0000250" key="2">
    <source>
        <dbReference type="UniProtKB" id="P0CE12"/>
    </source>
</evidence>
<evidence type="ECO:0000250" key="3">
    <source>
        <dbReference type="UniProtKB" id="Q8VSC3"/>
    </source>
</evidence>
<evidence type="ECO:0000255" key="4">
    <source>
        <dbReference type="PROSITE-ProRule" id="PRU01398"/>
    </source>
</evidence>
<evidence type="ECO:0000305" key="5"/>
<accession>Q3YTH5</accession>
<protein>
    <recommendedName>
        <fullName>E3 ubiquitin-protein ligase ipaH9.8</fullName>
        <ecNumber evidence="3">2.3.2.27</ecNumber>
    </recommendedName>
    <alternativeName>
        <fullName>Invasion plasmid antigen ipaH9.8</fullName>
    </alternativeName>
</protein>
<proteinExistence type="inferred from homology"/>
<keyword id="KW-1035">Host cytoplasm</keyword>
<keyword id="KW-1048">Host nucleus</keyword>
<keyword id="KW-0433">Leucine-rich repeat</keyword>
<keyword id="KW-0614">Plasmid</keyword>
<keyword id="KW-1185">Reference proteome</keyword>
<keyword id="KW-0677">Repeat</keyword>
<keyword id="KW-0964">Secreted</keyword>
<keyword id="KW-0808">Transferase</keyword>
<keyword id="KW-0832">Ubl conjugation</keyword>
<keyword id="KW-0833">Ubl conjugation pathway</keyword>
<keyword id="KW-0843">Virulence</keyword>
<dbReference type="EC" id="2.3.2.27" evidence="3"/>
<dbReference type="EMBL" id="CP000039">
    <property type="protein sequence ID" value="AAZ91187.1"/>
    <property type="molecule type" value="Genomic_DNA"/>
</dbReference>
<dbReference type="RefSeq" id="WP_000936807.1">
    <property type="nucleotide sequence ID" value="NC_007385.1"/>
</dbReference>
<dbReference type="SMR" id="Q3YTH5"/>
<dbReference type="KEGG" id="ssn:SSON_P167"/>
<dbReference type="HOGENOM" id="CLU_018533_2_0_6"/>
<dbReference type="Proteomes" id="UP000002529">
    <property type="component" value="Plasmid pSS_046"/>
</dbReference>
<dbReference type="GO" id="GO:0005576">
    <property type="term" value="C:extracellular region"/>
    <property type="evidence" value="ECO:0000250"/>
    <property type="project" value="UniProtKB"/>
</dbReference>
<dbReference type="GO" id="GO:0044164">
    <property type="term" value="C:host cell cytosol"/>
    <property type="evidence" value="ECO:0000250"/>
    <property type="project" value="UniProtKB"/>
</dbReference>
<dbReference type="GO" id="GO:0042025">
    <property type="term" value="C:host cell nucleus"/>
    <property type="evidence" value="ECO:0000250"/>
    <property type="project" value="UniProtKB"/>
</dbReference>
<dbReference type="GO" id="GO:0061630">
    <property type="term" value="F:ubiquitin protein ligase activity"/>
    <property type="evidence" value="ECO:0000250"/>
    <property type="project" value="UniProtKB"/>
</dbReference>
<dbReference type="GO" id="GO:0004842">
    <property type="term" value="F:ubiquitin-protein transferase activity"/>
    <property type="evidence" value="ECO:0000250"/>
    <property type="project" value="UniProtKB"/>
</dbReference>
<dbReference type="GO" id="GO:0044314">
    <property type="term" value="P:protein K27-linked ubiquitination"/>
    <property type="evidence" value="ECO:0000250"/>
    <property type="project" value="UniProtKB"/>
</dbReference>
<dbReference type="GO" id="GO:0070936">
    <property type="term" value="P:protein K48-linked ubiquitination"/>
    <property type="evidence" value="ECO:0000250"/>
    <property type="project" value="UniProtKB"/>
</dbReference>
<dbReference type="GO" id="GO:0052170">
    <property type="term" value="P:symbiont-mediated suppression of host innate immune response"/>
    <property type="evidence" value="ECO:0000250"/>
    <property type="project" value="UniProtKB"/>
</dbReference>
<dbReference type="FunFam" id="1.20.58.90:FF:000007">
    <property type="entry name" value="E3 ubiquitin-protein ligase ipaH9.8"/>
    <property type="match status" value="1"/>
</dbReference>
<dbReference type="FunFam" id="1.20.1270.130:FF:000001">
    <property type="entry name" value="Invasion plasmid antigen IpaH"/>
    <property type="match status" value="1"/>
</dbReference>
<dbReference type="FunFam" id="1.20.58.360:FF:000001">
    <property type="entry name" value="Probable E3 ubiquitin-protein ligase ipaH7.8"/>
    <property type="match status" value="1"/>
</dbReference>
<dbReference type="Gene3D" id="1.20.58.90">
    <property type="match status" value="1"/>
</dbReference>
<dbReference type="Gene3D" id="3.80.10.10">
    <property type="entry name" value="Ribonuclease Inhibitor"/>
    <property type="match status" value="1"/>
</dbReference>
<dbReference type="Gene3D" id="1.20.58.360">
    <property type="entry name" value="Shigella T3SS effector IpaH defines"/>
    <property type="match status" value="1"/>
</dbReference>
<dbReference type="Gene3D" id="1.20.1270.130">
    <property type="entry name" value="Shigella T3SS effector IpaH domain"/>
    <property type="match status" value="1"/>
</dbReference>
<dbReference type="InterPro" id="IPR051071">
    <property type="entry name" value="LRR-bact_E3_ubiq_ligases"/>
</dbReference>
<dbReference type="InterPro" id="IPR032675">
    <property type="entry name" value="LRR_dom_sf"/>
</dbReference>
<dbReference type="InterPro" id="IPR032674">
    <property type="entry name" value="LRR_E3_ligase_N"/>
</dbReference>
<dbReference type="InterPro" id="IPR029487">
    <property type="entry name" value="NEL_dom"/>
</dbReference>
<dbReference type="NCBIfam" id="NF046045">
    <property type="entry name" value="IpaH_Shig"/>
    <property type="match status" value="1"/>
</dbReference>
<dbReference type="PANTHER" id="PTHR47114">
    <property type="match status" value="1"/>
</dbReference>
<dbReference type="PANTHER" id="PTHR47114:SF2">
    <property type="entry name" value="OLIGODENDROCYTE-MYELIN GLYCOPROTEIN"/>
    <property type="match status" value="1"/>
</dbReference>
<dbReference type="Pfam" id="PF12468">
    <property type="entry name" value="LRR_TTSS"/>
    <property type="match status" value="1"/>
</dbReference>
<dbReference type="Pfam" id="PF14496">
    <property type="entry name" value="NEL"/>
    <property type="match status" value="1"/>
</dbReference>
<dbReference type="SMART" id="SM00364">
    <property type="entry name" value="LRR_BAC"/>
    <property type="match status" value="5"/>
</dbReference>
<dbReference type="SUPFAM" id="SSF52058">
    <property type="entry name" value="L domain-like"/>
    <property type="match status" value="1"/>
</dbReference>
<dbReference type="PROSITE" id="PS52053">
    <property type="entry name" value="NEL"/>
    <property type="match status" value="1"/>
</dbReference>
<feature type="chain" id="PRO_0000395760" description="E3 ubiquitin-protein ligase ipaH9.8">
    <location>
        <begin position="1"/>
        <end position="545"/>
    </location>
</feature>
<feature type="repeat" description="LRR 1">
    <location>
        <begin position="57"/>
        <end position="77"/>
    </location>
</feature>
<feature type="repeat" description="LRR 2">
    <location>
        <begin position="78"/>
        <end position="99"/>
    </location>
</feature>
<feature type="repeat" description="LRR 3">
    <location>
        <begin position="100"/>
        <end position="117"/>
    </location>
</feature>
<feature type="repeat" description="LRR 4">
    <location>
        <begin position="118"/>
        <end position="139"/>
    </location>
</feature>
<feature type="repeat" description="LRR 5">
    <location>
        <begin position="140"/>
        <end position="157"/>
    </location>
</feature>
<feature type="repeat" description="LRR 6">
    <location>
        <begin position="158"/>
        <end position="179"/>
    </location>
</feature>
<feature type="repeat" description="LRR 7">
    <location>
        <begin position="182"/>
        <end position="203"/>
    </location>
</feature>
<feature type="repeat" description="LRR 8">
    <location>
        <begin position="205"/>
        <end position="228"/>
    </location>
</feature>
<feature type="domain" description="NEL" evidence="4">
    <location>
        <begin position="253"/>
        <end position="545"/>
    </location>
</feature>
<feature type="region of interest" description="Interaction with target proteins" evidence="2">
    <location>
        <begin position="1"/>
        <end position="242"/>
    </location>
</feature>
<feature type="region of interest" description="Linker" evidence="2">
    <location>
        <begin position="243"/>
        <end position="250"/>
    </location>
</feature>
<feature type="region of interest" description="E3 ubiquitin-protein ligase catalytic domain" evidence="2">
    <location>
        <begin position="251"/>
        <end position="545"/>
    </location>
</feature>
<feature type="active site" description="Glycyl thioester intermediate" evidence="4">
    <location>
        <position position="337"/>
    </location>
</feature>
<sequence>MLPINNNFSLPQNSFYNTISGTYADYFSAWDKWEKQALPGEERDEAVSRLKECLINNSDELRLDRLNLSSLPDNLPAQITLLNVSYNQLTNLPELPVTLKKLYSASNKLSELPVLPPALESLQVQHNELENLPALPDSLLTMNISYNEIVSLPSLPQALKNLRATRNFLTELPAFSEGNNPVVREYFFDRNQISHIPESILNLRNECSIHISDNPLSSHALQALQRLTSSPDYHGPRIYFSMSDGQQNTLHRPLADAVTAWFPENKQSDVSQIWHAFEHEEHANTFSAFLDRLSDTVSARNTSGFREQVAAWLEKLSASAELRQQSFAVAADATESCEDRVALTWNNLRKTLLVHQASEGLFDNDTGALLSLGREMFRLEILEDIARDKVRTLHFVDEIEVYLAFQTMLAEKLQLSTAVKEMRFYGVSGVTANDLRTAEAMVRSREENEFTDWFSLWGPWHAVLKRTEADRWAQAEEQKYEMLENEYSQRVADRLKASGLSGDADAEREAGAQVMRETEQQIYRQLTDEVLALRLSENGSQLHHS</sequence>
<geneLocation type="plasmid">
    <name>pSS_046</name>
</geneLocation>
<comment type="function">
    <text evidence="3">Effector E3 ubiquitin ligase that interferes with host's ubiquitination pathway and modulates the acute inflammatory responses, thus facilitating bacterial colonization within the host cell. Interacts with IKBKG (NEMO) and TNIP1 (ABIN-1), a ubiquitin-binding adapter protein, which results in TNIP1-dependent 'Lys-27'-linked polyubiquitination of IKBKG. Consequently, polyubiquitinated IKBKG undergoes proteasome-dependent degradation, which perturbs NF-kappa-B activation during bacterial infection. Mediates polyubiquitination of host U2AF1, leading to its proteasomal degradation. Catalyzes 'Lys-48'-linked polyubiquitination and subsequent degradation of a subset of host guanylate-binding proteins (GBP1, GBP2, GBP4 and GBP6), thereby suppressing host cell defense. In contrast, host GBP3 and GBP7 are not ubiquitinated by IpaH9.8. Uses UBE2D2 (UBCH5B) as an E2 ubiquitin-conjugating enzyme.</text>
</comment>
<comment type="catalytic activity">
    <reaction evidence="3">
        <text>S-ubiquitinyl-[E2 ubiquitin-conjugating enzyme]-L-cysteine + [acceptor protein]-L-lysine = [E2 ubiquitin-conjugating enzyme]-L-cysteine + N(6)-ubiquitinyl-[acceptor protein]-L-lysine.</text>
        <dbReference type="EC" id="2.3.2.27"/>
    </reaction>
</comment>
<comment type="activity regulation">
    <text evidence="3">Exists in an autoinhibited state in the absence of substrate protein, due to interactions of the leucine-rich repeats with NEL domain. Is activated upon binding to a substrate protein.</text>
</comment>
<comment type="subunit">
    <text evidence="3">Also interacts with human and mouse U2AF1 (U2AF35).</text>
</comment>
<comment type="subcellular location">
    <subcellularLocation>
        <location evidence="3">Secreted</location>
    </subcellularLocation>
    <subcellularLocation>
        <location evidence="3">Host cytoplasm</location>
    </subcellularLocation>
    <subcellularLocation>
        <location evidence="3">Host nucleus</location>
    </subcellularLocation>
    <text evidence="3">Secreted via Mxi-Spa type III secretion system (T3SS), and delivered into the host cytoplasm. Transported into the host nucleus. This transport is independent of cytosolic factors, but dependent on temperature and partly on ATP/GTP.</text>
</comment>
<comment type="domain">
    <text evidence="3">The LRR (leucine-rich repeat) repeats are involved in substrate recognition with target proteins.</text>
</comment>
<comment type="PTM">
    <text evidence="1">Ubiquitinated in the presence of host E1 ubiquitin-activating enzyme, E2 ubiquitin-conjugating enzyme and ubiquitin.</text>
</comment>
<comment type="similarity">
    <text evidence="4 5">Belongs to the LRR-containing bacterial E3 ligase family.</text>
</comment>
<organism>
    <name type="scientific">Shigella sonnei (strain Ss046)</name>
    <dbReference type="NCBI Taxonomy" id="300269"/>
    <lineage>
        <taxon>Bacteria</taxon>
        <taxon>Pseudomonadati</taxon>
        <taxon>Pseudomonadota</taxon>
        <taxon>Gammaproteobacteria</taxon>
        <taxon>Enterobacterales</taxon>
        <taxon>Enterobacteriaceae</taxon>
        <taxon>Shigella</taxon>
    </lineage>
</organism>
<reference key="1">
    <citation type="journal article" date="2005" name="Nucleic Acids Res.">
        <title>Genome dynamics and diversity of Shigella species, the etiologic agents of bacillary dysentery.</title>
        <authorList>
            <person name="Yang F."/>
            <person name="Yang J."/>
            <person name="Zhang X."/>
            <person name="Chen L."/>
            <person name="Jiang Y."/>
            <person name="Yan Y."/>
            <person name="Tang X."/>
            <person name="Wang J."/>
            <person name="Xiong Z."/>
            <person name="Dong J."/>
            <person name="Xue Y."/>
            <person name="Zhu Y."/>
            <person name="Xu X."/>
            <person name="Sun L."/>
            <person name="Chen S."/>
            <person name="Nie H."/>
            <person name="Peng J."/>
            <person name="Xu J."/>
            <person name="Wang Y."/>
            <person name="Yuan Z."/>
            <person name="Wen Y."/>
            <person name="Yao Z."/>
            <person name="Shen Y."/>
            <person name="Qiang B."/>
            <person name="Hou Y."/>
            <person name="Yu J."/>
            <person name="Jin Q."/>
        </authorList>
    </citation>
    <scope>NUCLEOTIDE SEQUENCE [LARGE SCALE GENOMIC DNA]</scope>
    <source>
        <strain>Ss046</strain>
    </source>
</reference>
<reference key="2">
    <citation type="journal article" date="2005" name="Plasmid">
        <title>The complete sequence and analysis of the large virulence plasmid pSS of Shigella sonnei.</title>
        <authorList>
            <person name="Jiang Y."/>
            <person name="Yang F."/>
            <person name="Zhang X."/>
            <person name="Yang J."/>
            <person name="Chen L."/>
            <person name="Yan Y."/>
            <person name="Nie H."/>
            <person name="Xiong Z."/>
            <person name="Wang J."/>
            <person name="Dong J."/>
            <person name="Xue Y."/>
            <person name="Xu X."/>
            <person name="Zhu Y."/>
            <person name="Chen S."/>
            <person name="Jin Q."/>
        </authorList>
    </citation>
    <scope>NUCLEOTIDE SEQUENCE [LARGE SCALE GENOMIC DNA]</scope>
    <source>
        <strain>Ss046</strain>
    </source>
</reference>
<name>IPA9_SHISS</name>